<keyword id="KW-0117">Actin capping</keyword>
<keyword id="KW-0009">Actin-binding</keyword>
<keyword id="KW-0597">Phosphoprotein</keyword>
<keyword id="KW-1185">Reference proteome</keyword>
<organism>
    <name type="scientific">Macaca fascicularis</name>
    <name type="common">Crab-eating macaque</name>
    <name type="synonym">Cynomolgus monkey</name>
    <dbReference type="NCBI Taxonomy" id="9541"/>
    <lineage>
        <taxon>Eukaryota</taxon>
        <taxon>Metazoa</taxon>
        <taxon>Chordata</taxon>
        <taxon>Craniata</taxon>
        <taxon>Vertebrata</taxon>
        <taxon>Euteleostomi</taxon>
        <taxon>Mammalia</taxon>
        <taxon>Eutheria</taxon>
        <taxon>Euarchontoglires</taxon>
        <taxon>Primates</taxon>
        <taxon>Haplorrhini</taxon>
        <taxon>Catarrhini</taxon>
        <taxon>Cercopithecidae</taxon>
        <taxon>Cercopithecinae</taxon>
        <taxon>Macaca</taxon>
    </lineage>
</organism>
<gene>
    <name type="primary">CAPZA3</name>
    <name type="ORF">QtsA-14785</name>
</gene>
<name>CAZA3_MACFA</name>
<reference key="1">
    <citation type="submission" date="2005-06" db="EMBL/GenBank/DDBJ databases">
        <title>DNA sequences of macaque genes expressed in brain or testis and its evolutionary implications.</title>
        <authorList>
            <consortium name="International consortium for macaque cDNA sequencing and analysis"/>
        </authorList>
    </citation>
    <scope>NUCLEOTIDE SEQUENCE [LARGE SCALE MRNA]</scope>
    <source>
        <tissue>Testis</tissue>
    </source>
</reference>
<protein>
    <recommendedName>
        <fullName>F-actin-capping protein subunit alpha-3</fullName>
    </recommendedName>
    <alternativeName>
        <fullName>CapZ alpha-3</fullName>
    </alternativeName>
</protein>
<comment type="function">
    <text evidence="1">F-actin-capping proteins bind in a Ca(2+)-independent manner to the fast growing ends of actin filaments (barbed end) thereby blocking the exchange of subunits at these ends. Unlike other capping proteins (such as gelsolin and severin), these proteins do not sever actin filaments. May play a role in the morphogenesis of spermatid (By similarity).</text>
</comment>
<comment type="subunit">
    <text evidence="1">Component of the F-actin capping complex, composed of a heterodimer of an alpha and a beta subunit. Component of the WASH complex, composed of F-actin-capping protein subunit alpha (CAPZA1, CAPZA2 or CAPZA3), F-actin-capping protein subunit beta (CAPZB), WASHC1, WASHC2, WASHC3, WASHC4 and WASHC5 (By similarity).</text>
</comment>
<comment type="similarity">
    <text evidence="3">Belongs to the F-actin-capping protein alpha subunit family.</text>
</comment>
<proteinExistence type="evidence at transcript level"/>
<dbReference type="EMBL" id="AB168787">
    <property type="protein sequence ID" value="BAE00894.1"/>
    <property type="molecule type" value="mRNA"/>
</dbReference>
<dbReference type="RefSeq" id="NP_001270709.1">
    <property type="nucleotide sequence ID" value="NM_001283780.1"/>
</dbReference>
<dbReference type="RefSeq" id="XP_045220735.1">
    <property type="nucleotide sequence ID" value="XM_045364800.2"/>
</dbReference>
<dbReference type="SMR" id="Q4R7M8"/>
<dbReference type="STRING" id="9541.ENSMFAP00000012573"/>
<dbReference type="Ensembl" id="ENSMFAT00000059101.2">
    <property type="protein sequence ID" value="ENSMFAP00000012573.1"/>
    <property type="gene ID" value="ENSMFAG00000025207.2"/>
</dbReference>
<dbReference type="GeneID" id="101926750"/>
<dbReference type="VEuPathDB" id="HostDB:ENSMFAG00000025207"/>
<dbReference type="eggNOG" id="KOG0836">
    <property type="taxonomic scope" value="Eukaryota"/>
</dbReference>
<dbReference type="GeneTree" id="ENSGT00950000183119"/>
<dbReference type="OMA" id="HFPAGNC"/>
<dbReference type="Proteomes" id="UP000233100">
    <property type="component" value="Chromosome 11"/>
</dbReference>
<dbReference type="Bgee" id="ENSMFAG00000025207">
    <property type="expression patterns" value="Expressed in multicellular organism"/>
</dbReference>
<dbReference type="GO" id="GO:0030863">
    <property type="term" value="C:cortical cytoskeleton"/>
    <property type="evidence" value="ECO:0007669"/>
    <property type="project" value="Ensembl"/>
</dbReference>
<dbReference type="GO" id="GO:0008290">
    <property type="term" value="C:F-actin capping protein complex"/>
    <property type="evidence" value="ECO:0007669"/>
    <property type="project" value="InterPro"/>
</dbReference>
<dbReference type="GO" id="GO:0016020">
    <property type="term" value="C:membrane"/>
    <property type="evidence" value="ECO:0007669"/>
    <property type="project" value="Ensembl"/>
</dbReference>
<dbReference type="GO" id="GO:0061827">
    <property type="term" value="C:sperm head"/>
    <property type="evidence" value="ECO:0007669"/>
    <property type="project" value="Ensembl"/>
</dbReference>
<dbReference type="GO" id="GO:0051015">
    <property type="term" value="F:actin filament binding"/>
    <property type="evidence" value="ECO:0007669"/>
    <property type="project" value="TreeGrafter"/>
</dbReference>
<dbReference type="GO" id="GO:0007015">
    <property type="term" value="P:actin filament organization"/>
    <property type="evidence" value="ECO:0007669"/>
    <property type="project" value="Ensembl"/>
</dbReference>
<dbReference type="GO" id="GO:0051016">
    <property type="term" value="P:barbed-end actin filament capping"/>
    <property type="evidence" value="ECO:0007669"/>
    <property type="project" value="InterPro"/>
</dbReference>
<dbReference type="GO" id="GO:0007028">
    <property type="term" value="P:cytoplasm organization"/>
    <property type="evidence" value="ECO:0007669"/>
    <property type="project" value="Ensembl"/>
</dbReference>
<dbReference type="GO" id="GO:0007286">
    <property type="term" value="P:spermatid development"/>
    <property type="evidence" value="ECO:0007669"/>
    <property type="project" value="Ensembl"/>
</dbReference>
<dbReference type="FunFam" id="3.30.1140.60:FF:000002">
    <property type="entry name" value="F-actin-capping protein subunit alpha"/>
    <property type="match status" value="1"/>
</dbReference>
<dbReference type="FunFam" id="3.90.1150.210:FF:000003">
    <property type="entry name" value="F-actin-capping protein subunit alpha"/>
    <property type="match status" value="1"/>
</dbReference>
<dbReference type="Gene3D" id="3.30.1140.60">
    <property type="entry name" value="F-actin capping protein, alpha subunit"/>
    <property type="match status" value="1"/>
</dbReference>
<dbReference type="Gene3D" id="3.90.1150.210">
    <property type="entry name" value="F-actin capping protein, beta subunit"/>
    <property type="match status" value="1"/>
</dbReference>
<dbReference type="InterPro" id="IPR002189">
    <property type="entry name" value="CapZ_alpha"/>
</dbReference>
<dbReference type="InterPro" id="IPR037282">
    <property type="entry name" value="CapZ_alpha/beta"/>
</dbReference>
<dbReference type="InterPro" id="IPR042276">
    <property type="entry name" value="CapZ_alpha/beta_2"/>
</dbReference>
<dbReference type="InterPro" id="IPR042489">
    <property type="entry name" value="CapZ_alpha_1"/>
</dbReference>
<dbReference type="InterPro" id="IPR017865">
    <property type="entry name" value="F-actin_cap_asu_CS"/>
</dbReference>
<dbReference type="PANTHER" id="PTHR10653">
    <property type="entry name" value="F-ACTIN-CAPPING PROTEIN SUBUNIT ALPHA"/>
    <property type="match status" value="1"/>
</dbReference>
<dbReference type="PANTHER" id="PTHR10653:SF6">
    <property type="entry name" value="F-ACTIN-CAPPING PROTEIN SUBUNIT ALPHA-3"/>
    <property type="match status" value="1"/>
</dbReference>
<dbReference type="Pfam" id="PF01267">
    <property type="entry name" value="F-actin_cap_A"/>
    <property type="match status" value="1"/>
</dbReference>
<dbReference type="PRINTS" id="PR00191">
    <property type="entry name" value="FACTINCAPA"/>
</dbReference>
<dbReference type="SUPFAM" id="SSF90096">
    <property type="entry name" value="Subunits of heterodimeric actin filament capping protein Capz"/>
    <property type="match status" value="1"/>
</dbReference>
<dbReference type="PROSITE" id="PS00748">
    <property type="entry name" value="F_ACTIN_CAPPING_A_1"/>
    <property type="match status" value="1"/>
</dbReference>
<dbReference type="PROSITE" id="PS00749">
    <property type="entry name" value="F_ACTIN_CAPPING_A_2"/>
    <property type="match status" value="1"/>
</dbReference>
<sequence length="299" mass="35056">MTLSVLSRKDKERVIRRLLLQAPPGEFVNAFDDLCLLIRDEKLMHHQGECAGHQHCQKYSVPLCIDGNPVLLSHHNVMGDYRFFDHQSKLSFRYDLLQNQLKDIQSHGIIRNETEYLRVVVLCALKLYVNDHYPKGNCNVLRKTVKSKEYLIACIEDHNYETGECWNGLWKSKWIFQVNPFLTQVTGRIFVQAHFFRCVNLHIEISKDLKESLEIVNQAQLALSFARLVEEQENKFQAAVLEELQELSNEALRKILRRDLPVTRTLIDWQRILSDLNLVMYPKLGYVIYSRSVLCNWII</sequence>
<feature type="chain" id="PRO_0000295860" description="F-actin-capping protein subunit alpha-3">
    <location>
        <begin position="1"/>
        <end position="299"/>
    </location>
</feature>
<feature type="modified residue" description="Phosphoserine" evidence="2">
    <location>
        <position position="290"/>
    </location>
</feature>
<accession>Q4R7M8</accession>
<evidence type="ECO:0000250" key="1"/>
<evidence type="ECO:0000250" key="2">
    <source>
        <dbReference type="UniProtKB" id="Q9WUV6"/>
    </source>
</evidence>
<evidence type="ECO:0000305" key="3"/>